<organism>
    <name type="scientific">Methylobacterium radiotolerans (strain ATCC 27329 / DSM 1819 / JCM 2831 / NBRC 15690 / NCIMB 10815 / 0-1)</name>
    <dbReference type="NCBI Taxonomy" id="426355"/>
    <lineage>
        <taxon>Bacteria</taxon>
        <taxon>Pseudomonadati</taxon>
        <taxon>Pseudomonadota</taxon>
        <taxon>Alphaproteobacteria</taxon>
        <taxon>Hyphomicrobiales</taxon>
        <taxon>Methylobacteriaceae</taxon>
        <taxon>Methylobacterium</taxon>
    </lineage>
</organism>
<feature type="chain" id="PRO_1000101301" description="Glycine--tRNA ligase beta subunit">
    <location>
        <begin position="1"/>
        <end position="699"/>
    </location>
</feature>
<reference key="1">
    <citation type="submission" date="2008-03" db="EMBL/GenBank/DDBJ databases">
        <title>Complete sequence of chromosome of Methylobacterium radiotolerans JCM 2831.</title>
        <authorList>
            <consortium name="US DOE Joint Genome Institute"/>
            <person name="Copeland A."/>
            <person name="Lucas S."/>
            <person name="Lapidus A."/>
            <person name="Glavina del Rio T."/>
            <person name="Dalin E."/>
            <person name="Tice H."/>
            <person name="Bruce D."/>
            <person name="Goodwin L."/>
            <person name="Pitluck S."/>
            <person name="Kiss H."/>
            <person name="Brettin T."/>
            <person name="Detter J.C."/>
            <person name="Han C."/>
            <person name="Kuske C.R."/>
            <person name="Schmutz J."/>
            <person name="Larimer F."/>
            <person name="Land M."/>
            <person name="Hauser L."/>
            <person name="Kyrpides N."/>
            <person name="Mikhailova N."/>
            <person name="Marx C.J."/>
            <person name="Richardson P."/>
        </authorList>
    </citation>
    <scope>NUCLEOTIDE SEQUENCE [LARGE SCALE GENOMIC DNA]</scope>
    <source>
        <strain>ATCC 27329 / DSM 1819 / JCM 2831 / NBRC 15690 / NCIMB 10815 / 0-1</strain>
    </source>
</reference>
<comment type="catalytic activity">
    <reaction evidence="1">
        <text>tRNA(Gly) + glycine + ATP = glycyl-tRNA(Gly) + AMP + diphosphate</text>
        <dbReference type="Rhea" id="RHEA:16013"/>
        <dbReference type="Rhea" id="RHEA-COMP:9664"/>
        <dbReference type="Rhea" id="RHEA-COMP:9683"/>
        <dbReference type="ChEBI" id="CHEBI:30616"/>
        <dbReference type="ChEBI" id="CHEBI:33019"/>
        <dbReference type="ChEBI" id="CHEBI:57305"/>
        <dbReference type="ChEBI" id="CHEBI:78442"/>
        <dbReference type="ChEBI" id="CHEBI:78522"/>
        <dbReference type="ChEBI" id="CHEBI:456215"/>
        <dbReference type="EC" id="6.1.1.14"/>
    </reaction>
</comment>
<comment type="subunit">
    <text evidence="1">Tetramer of two alpha and two beta subunits.</text>
</comment>
<comment type="subcellular location">
    <subcellularLocation>
        <location evidence="1">Cytoplasm</location>
    </subcellularLocation>
</comment>
<comment type="similarity">
    <text evidence="1">Belongs to the class-II aminoacyl-tRNA synthetase family.</text>
</comment>
<proteinExistence type="inferred from homology"/>
<name>SYGB_METRJ</name>
<sequence length="699" mass="75915">MPDLLLELRSEEIPARMQRRAAEDLKKLVTDALVARGFLYEGARAFSTPRRLALHIAGLPARGEAVREERRGPRVGAPEAAVQGFLKGAGLASLDQATTVTDPKKGEFYLAVIERPGRETLDVLAEFLPEIVRSFPWPKSMRWGAASAEPGSLRWVRPLQSIVATFGPETETPEVIPVSVGGIAAGTVTYGHRFLAPEAIEVRRFDDYIQALERAKVVLDADRRKDVILHDARDLAFARGLDLVEDEGLLEEVSGLVEWPVVLMGSFDESFLDIPAEAIRATIRANQKCFVLRKGGSEDLAPAFILVSNLVATDGGQAITAGNERVVRARLSDAKFFWETDKATRLEDRLPKLDAIVFHEKLGTQGERIARIAALAKDLAPRVGADPALAERAARLAKADLVTEMVGEFPELQGLMGRKYAALQGEHDSVCAAIEEHYKPLGPSDRVPTDPVSIAVALADKLDTLAGFWAIDEKPTGSKDPFALRRAALGVIRLILDRGLRLRLLEQVGAADRSLAGRAGADARDLLGFFADRLKVYLRDQGARHDLIDAVFALPGQDDLLMVVRRVEALAAFLDTEDGKNLLAGYKRAANILRIEEKKDGRAYDAAPDAALAAAGEPAERALAEALAKARETASAAVAREDFSGAMQALSTLRAPVDAFFQDVTVNAPDPKLRENRLALLNALRAATREVAEFAKIEG</sequence>
<accession>B1M1W2</accession>
<protein>
    <recommendedName>
        <fullName evidence="1">Glycine--tRNA ligase beta subunit</fullName>
        <ecNumber evidence="1">6.1.1.14</ecNumber>
    </recommendedName>
    <alternativeName>
        <fullName evidence="1">Glycyl-tRNA synthetase beta subunit</fullName>
        <shortName evidence="1">GlyRS</shortName>
    </alternativeName>
</protein>
<dbReference type="EC" id="6.1.1.14" evidence="1"/>
<dbReference type="EMBL" id="CP001001">
    <property type="protein sequence ID" value="ACB23147.1"/>
    <property type="molecule type" value="Genomic_DNA"/>
</dbReference>
<dbReference type="RefSeq" id="WP_012318137.1">
    <property type="nucleotide sequence ID" value="NC_010505.1"/>
</dbReference>
<dbReference type="SMR" id="B1M1W2"/>
<dbReference type="STRING" id="426355.Mrad2831_1138"/>
<dbReference type="GeneID" id="6137155"/>
<dbReference type="KEGG" id="mrd:Mrad2831_1138"/>
<dbReference type="PATRIC" id="fig|426355.14.peg.1182"/>
<dbReference type="eggNOG" id="COG0751">
    <property type="taxonomic scope" value="Bacteria"/>
</dbReference>
<dbReference type="HOGENOM" id="CLU_007220_2_1_5"/>
<dbReference type="OrthoDB" id="9775440at2"/>
<dbReference type="Proteomes" id="UP000006589">
    <property type="component" value="Chromosome"/>
</dbReference>
<dbReference type="GO" id="GO:0005829">
    <property type="term" value="C:cytosol"/>
    <property type="evidence" value="ECO:0007669"/>
    <property type="project" value="TreeGrafter"/>
</dbReference>
<dbReference type="GO" id="GO:0004814">
    <property type="term" value="F:arginine-tRNA ligase activity"/>
    <property type="evidence" value="ECO:0007669"/>
    <property type="project" value="InterPro"/>
</dbReference>
<dbReference type="GO" id="GO:0005524">
    <property type="term" value="F:ATP binding"/>
    <property type="evidence" value="ECO:0007669"/>
    <property type="project" value="UniProtKB-UniRule"/>
</dbReference>
<dbReference type="GO" id="GO:0004820">
    <property type="term" value="F:glycine-tRNA ligase activity"/>
    <property type="evidence" value="ECO:0007669"/>
    <property type="project" value="UniProtKB-UniRule"/>
</dbReference>
<dbReference type="GO" id="GO:0006420">
    <property type="term" value="P:arginyl-tRNA aminoacylation"/>
    <property type="evidence" value="ECO:0007669"/>
    <property type="project" value="InterPro"/>
</dbReference>
<dbReference type="GO" id="GO:0006426">
    <property type="term" value="P:glycyl-tRNA aminoacylation"/>
    <property type="evidence" value="ECO:0007669"/>
    <property type="project" value="UniProtKB-UniRule"/>
</dbReference>
<dbReference type="Gene3D" id="1.10.730.10">
    <property type="entry name" value="Isoleucyl-tRNA Synthetase, Domain 1"/>
    <property type="match status" value="1"/>
</dbReference>
<dbReference type="HAMAP" id="MF_00255">
    <property type="entry name" value="Gly_tRNA_synth_beta"/>
    <property type="match status" value="1"/>
</dbReference>
<dbReference type="InterPro" id="IPR008909">
    <property type="entry name" value="DALR_anticod-bd"/>
</dbReference>
<dbReference type="InterPro" id="IPR015944">
    <property type="entry name" value="Gly-tRNA-synth_bsu"/>
</dbReference>
<dbReference type="InterPro" id="IPR006194">
    <property type="entry name" value="Gly-tRNA-synth_heterodimer"/>
</dbReference>
<dbReference type="NCBIfam" id="TIGR00211">
    <property type="entry name" value="glyS"/>
    <property type="match status" value="1"/>
</dbReference>
<dbReference type="PANTHER" id="PTHR30075:SF2">
    <property type="entry name" value="GLYCINE--TRNA LIGASE, CHLOROPLASTIC_MITOCHONDRIAL 2"/>
    <property type="match status" value="1"/>
</dbReference>
<dbReference type="PANTHER" id="PTHR30075">
    <property type="entry name" value="GLYCYL-TRNA SYNTHETASE"/>
    <property type="match status" value="1"/>
</dbReference>
<dbReference type="Pfam" id="PF05746">
    <property type="entry name" value="DALR_1"/>
    <property type="match status" value="1"/>
</dbReference>
<dbReference type="Pfam" id="PF02092">
    <property type="entry name" value="tRNA_synt_2f"/>
    <property type="match status" value="1"/>
</dbReference>
<dbReference type="PRINTS" id="PR01045">
    <property type="entry name" value="TRNASYNTHGB"/>
</dbReference>
<dbReference type="SUPFAM" id="SSF109604">
    <property type="entry name" value="HD-domain/PDEase-like"/>
    <property type="match status" value="1"/>
</dbReference>
<dbReference type="PROSITE" id="PS50861">
    <property type="entry name" value="AA_TRNA_LIGASE_II_GLYAB"/>
    <property type="match status" value="1"/>
</dbReference>
<evidence type="ECO:0000255" key="1">
    <source>
        <dbReference type="HAMAP-Rule" id="MF_00255"/>
    </source>
</evidence>
<keyword id="KW-0030">Aminoacyl-tRNA synthetase</keyword>
<keyword id="KW-0067">ATP-binding</keyword>
<keyword id="KW-0963">Cytoplasm</keyword>
<keyword id="KW-0436">Ligase</keyword>
<keyword id="KW-0547">Nucleotide-binding</keyword>
<keyword id="KW-0648">Protein biosynthesis</keyword>
<gene>
    <name evidence="1" type="primary">glyS</name>
    <name type="ordered locus">Mrad2831_1138</name>
</gene>